<name>TRUB_YERPS</name>
<keyword id="KW-0413">Isomerase</keyword>
<keyword id="KW-0819">tRNA processing</keyword>
<feature type="chain" id="PRO_0000121952" description="tRNA pseudouridine synthase B">
    <location>
        <begin position="1"/>
        <end position="324"/>
    </location>
</feature>
<feature type="active site" description="Nucleophile" evidence="1">
    <location>
        <position position="48"/>
    </location>
</feature>
<feature type="binding site" evidence="1">
    <location>
        <position position="43"/>
    </location>
    <ligand>
        <name>substrate</name>
    </ligand>
</feature>
<feature type="binding site" evidence="1">
    <location>
        <position position="76"/>
    </location>
    <ligand>
        <name>substrate</name>
    </ligand>
</feature>
<feature type="binding site" evidence="1">
    <location>
        <position position="179"/>
    </location>
    <ligand>
        <name>substrate</name>
    </ligand>
</feature>
<feature type="binding site" evidence="1">
    <location>
        <position position="200"/>
    </location>
    <ligand>
        <name>substrate</name>
    </ligand>
</feature>
<comment type="function">
    <text evidence="1">Responsible for synthesis of pseudouridine from uracil-55 in the psi GC loop of transfer RNAs.</text>
</comment>
<comment type="catalytic activity">
    <reaction evidence="1">
        <text>uridine(55) in tRNA = pseudouridine(55) in tRNA</text>
        <dbReference type="Rhea" id="RHEA:42532"/>
        <dbReference type="Rhea" id="RHEA-COMP:10101"/>
        <dbReference type="Rhea" id="RHEA-COMP:10102"/>
        <dbReference type="ChEBI" id="CHEBI:65314"/>
        <dbReference type="ChEBI" id="CHEBI:65315"/>
        <dbReference type="EC" id="5.4.99.25"/>
    </reaction>
</comment>
<comment type="similarity">
    <text evidence="1">Belongs to the pseudouridine synthase TruB family. Type 1 subfamily.</text>
</comment>
<proteinExistence type="inferred from homology"/>
<reference key="1">
    <citation type="journal article" date="2004" name="Proc. Natl. Acad. Sci. U.S.A.">
        <title>Insights into the evolution of Yersinia pestis through whole-genome comparison with Yersinia pseudotuberculosis.</title>
        <authorList>
            <person name="Chain P.S.G."/>
            <person name="Carniel E."/>
            <person name="Larimer F.W."/>
            <person name="Lamerdin J."/>
            <person name="Stoutland P.O."/>
            <person name="Regala W.M."/>
            <person name="Georgescu A.M."/>
            <person name="Vergez L.M."/>
            <person name="Land M.L."/>
            <person name="Motin V.L."/>
            <person name="Brubaker R.R."/>
            <person name="Fowler J."/>
            <person name="Hinnebusch J."/>
            <person name="Marceau M."/>
            <person name="Medigue C."/>
            <person name="Simonet M."/>
            <person name="Chenal-Francisque V."/>
            <person name="Souza B."/>
            <person name="Dacheux D."/>
            <person name="Elliott J.M."/>
            <person name="Derbise A."/>
            <person name="Hauser L.J."/>
            <person name="Garcia E."/>
        </authorList>
    </citation>
    <scope>NUCLEOTIDE SEQUENCE [LARGE SCALE GENOMIC DNA]</scope>
    <source>
        <strain>IP32953</strain>
    </source>
</reference>
<organism>
    <name type="scientific">Yersinia pseudotuberculosis serotype I (strain IP32953)</name>
    <dbReference type="NCBI Taxonomy" id="273123"/>
    <lineage>
        <taxon>Bacteria</taxon>
        <taxon>Pseudomonadati</taxon>
        <taxon>Pseudomonadota</taxon>
        <taxon>Gammaproteobacteria</taxon>
        <taxon>Enterobacterales</taxon>
        <taxon>Yersiniaceae</taxon>
        <taxon>Yersinia</taxon>
    </lineage>
</organism>
<dbReference type="EC" id="5.4.99.25" evidence="1"/>
<dbReference type="EMBL" id="BX936398">
    <property type="protein sequence ID" value="CAH19722.1"/>
    <property type="molecule type" value="Genomic_DNA"/>
</dbReference>
<dbReference type="RefSeq" id="WP_002209256.1">
    <property type="nucleotide sequence ID" value="NZ_CP009712.1"/>
</dbReference>
<dbReference type="SMR" id="Q66F58"/>
<dbReference type="GeneID" id="57975222"/>
<dbReference type="KEGG" id="ypo:BZ17_2081"/>
<dbReference type="KEGG" id="yps:YPTB0482"/>
<dbReference type="PATRIC" id="fig|273123.14.peg.2209"/>
<dbReference type="Proteomes" id="UP000001011">
    <property type="component" value="Chromosome"/>
</dbReference>
<dbReference type="GO" id="GO:0003723">
    <property type="term" value="F:RNA binding"/>
    <property type="evidence" value="ECO:0007669"/>
    <property type="project" value="InterPro"/>
</dbReference>
<dbReference type="GO" id="GO:0160148">
    <property type="term" value="F:tRNA pseudouridine(55) synthase activity"/>
    <property type="evidence" value="ECO:0007669"/>
    <property type="project" value="UniProtKB-EC"/>
</dbReference>
<dbReference type="GO" id="GO:1990481">
    <property type="term" value="P:mRNA pseudouridine synthesis"/>
    <property type="evidence" value="ECO:0007669"/>
    <property type="project" value="TreeGrafter"/>
</dbReference>
<dbReference type="GO" id="GO:0031119">
    <property type="term" value="P:tRNA pseudouridine synthesis"/>
    <property type="evidence" value="ECO:0007669"/>
    <property type="project" value="UniProtKB-UniRule"/>
</dbReference>
<dbReference type="CDD" id="cd02573">
    <property type="entry name" value="PseudoU_synth_EcTruB"/>
    <property type="match status" value="1"/>
</dbReference>
<dbReference type="CDD" id="cd21152">
    <property type="entry name" value="PUA_TruB_bacterial"/>
    <property type="match status" value="1"/>
</dbReference>
<dbReference type="FunFam" id="2.30.130.10:FF:000004">
    <property type="entry name" value="tRNA pseudouridine synthase B"/>
    <property type="match status" value="1"/>
</dbReference>
<dbReference type="FunFam" id="3.30.2350.10:FF:000003">
    <property type="entry name" value="tRNA pseudouridine synthase B"/>
    <property type="match status" value="1"/>
</dbReference>
<dbReference type="Gene3D" id="3.30.2350.10">
    <property type="entry name" value="Pseudouridine synthase"/>
    <property type="match status" value="1"/>
</dbReference>
<dbReference type="Gene3D" id="2.30.130.10">
    <property type="entry name" value="PUA domain"/>
    <property type="match status" value="1"/>
</dbReference>
<dbReference type="HAMAP" id="MF_01080">
    <property type="entry name" value="TruB_bact"/>
    <property type="match status" value="1"/>
</dbReference>
<dbReference type="InterPro" id="IPR020103">
    <property type="entry name" value="PsdUridine_synth_cat_dom_sf"/>
</dbReference>
<dbReference type="InterPro" id="IPR002501">
    <property type="entry name" value="PsdUridine_synth_N"/>
</dbReference>
<dbReference type="InterPro" id="IPR015947">
    <property type="entry name" value="PUA-like_sf"/>
</dbReference>
<dbReference type="InterPro" id="IPR036974">
    <property type="entry name" value="PUA_sf"/>
</dbReference>
<dbReference type="InterPro" id="IPR014780">
    <property type="entry name" value="tRNA_psdUridine_synth_TruB"/>
</dbReference>
<dbReference type="InterPro" id="IPR015240">
    <property type="entry name" value="tRNA_sdUridine_synth_fam1_C"/>
</dbReference>
<dbReference type="InterPro" id="IPR032819">
    <property type="entry name" value="TruB_C"/>
</dbReference>
<dbReference type="NCBIfam" id="TIGR00431">
    <property type="entry name" value="TruB"/>
    <property type="match status" value="1"/>
</dbReference>
<dbReference type="PANTHER" id="PTHR13767:SF2">
    <property type="entry name" value="PSEUDOURIDYLATE SYNTHASE TRUB1"/>
    <property type="match status" value="1"/>
</dbReference>
<dbReference type="PANTHER" id="PTHR13767">
    <property type="entry name" value="TRNA-PSEUDOURIDINE SYNTHASE"/>
    <property type="match status" value="1"/>
</dbReference>
<dbReference type="Pfam" id="PF09157">
    <property type="entry name" value="TruB-C_2"/>
    <property type="match status" value="1"/>
</dbReference>
<dbReference type="Pfam" id="PF16198">
    <property type="entry name" value="TruB_C_2"/>
    <property type="match status" value="1"/>
</dbReference>
<dbReference type="Pfam" id="PF01509">
    <property type="entry name" value="TruB_N"/>
    <property type="match status" value="1"/>
</dbReference>
<dbReference type="SUPFAM" id="SSF55120">
    <property type="entry name" value="Pseudouridine synthase"/>
    <property type="match status" value="1"/>
</dbReference>
<dbReference type="SUPFAM" id="SSF88697">
    <property type="entry name" value="PUA domain-like"/>
    <property type="match status" value="1"/>
</dbReference>
<sequence>MGRPRRRGRDINGVLLLDKPLGLSSNDVLQKVKRLFSANRAGHTGALDPLATGMLPICLGEATKFSQFLLDSDKRYRVVARLGQRTDTSDAEGALISEREVNLTQAQIDTALESFRGESQQIPSMYSALKHQGKPLYEYARQGIEVEREARSITVYELLFIRWEGNDLELEIHCSKGTYIRTIIDDLGELLGCGAHVSYLRRLQVATYPSERMVTLEQLTAMVEAAQAEGRSPNPELDSLLLPMDSAVLNFPEVNLLPSVAAYVKQGQPVHVSGAPSEGMVRITEGKERNFIGIGTIAEDGRVAPKRLVVESVEVENLPVENKK</sequence>
<protein>
    <recommendedName>
        <fullName evidence="1">tRNA pseudouridine synthase B</fullName>
        <ecNumber evidence="1">5.4.99.25</ecNumber>
    </recommendedName>
    <alternativeName>
        <fullName evidence="1">tRNA pseudouridine(55) synthase</fullName>
        <shortName evidence="1">Psi55 synthase</shortName>
    </alternativeName>
    <alternativeName>
        <fullName evidence="1">tRNA pseudouridylate synthase</fullName>
    </alternativeName>
    <alternativeName>
        <fullName evidence="1">tRNA-uridine isomerase</fullName>
    </alternativeName>
</protein>
<accession>Q66F58</accession>
<gene>
    <name evidence="1" type="primary">truB</name>
    <name type="ordered locus">YPTB0482</name>
</gene>
<evidence type="ECO:0000255" key="1">
    <source>
        <dbReference type="HAMAP-Rule" id="MF_01080"/>
    </source>
</evidence>